<protein>
    <recommendedName>
        <fullName>Methionine--tRNA ligase</fullName>
        <ecNumber>6.1.1.10</ecNumber>
    </recommendedName>
    <alternativeName>
        <fullName>Methionyl-tRNA synthetase</fullName>
        <shortName>MetRS</shortName>
    </alternativeName>
</protein>
<gene>
    <name type="primary">metG</name>
    <name type="synonym">metS</name>
    <name type="ordered locus">TM_1085</name>
</gene>
<keyword id="KW-0030">Aminoacyl-tRNA synthetase</keyword>
<keyword id="KW-0067">ATP-binding</keyword>
<keyword id="KW-0963">Cytoplasm</keyword>
<keyword id="KW-0436">Ligase</keyword>
<keyword id="KW-0479">Metal-binding</keyword>
<keyword id="KW-0547">Nucleotide-binding</keyword>
<keyword id="KW-0648">Protein biosynthesis</keyword>
<keyword id="KW-1185">Reference proteome</keyword>
<keyword id="KW-0694">RNA-binding</keyword>
<keyword id="KW-0820">tRNA-binding</keyword>
<keyword id="KW-0862">Zinc</keyword>
<evidence type="ECO:0000250" key="1"/>
<evidence type="ECO:0000305" key="2"/>
<proteinExistence type="inferred from homology"/>
<feature type="chain" id="PRO_0000139257" description="Methionine--tRNA ligase">
    <location>
        <begin position="1"/>
        <end position="629"/>
    </location>
</feature>
<feature type="domain" description="tRNA-binding">
    <location>
        <begin position="529"/>
        <end position="629"/>
    </location>
</feature>
<feature type="short sequence motif" description="'HIGH' region">
    <location>
        <begin position="10"/>
        <end position="20"/>
    </location>
</feature>
<feature type="short sequence motif" description="'KMSKS' region">
    <location>
        <begin position="297"/>
        <end position="301"/>
    </location>
</feature>
<feature type="binding site" evidence="1">
    <location>
        <position position="125"/>
    </location>
    <ligand>
        <name>Zn(2+)</name>
        <dbReference type="ChEBI" id="CHEBI:29105"/>
    </ligand>
</feature>
<feature type="binding site" evidence="1">
    <location>
        <position position="128"/>
    </location>
    <ligand>
        <name>Zn(2+)</name>
        <dbReference type="ChEBI" id="CHEBI:29105"/>
    </ligand>
</feature>
<feature type="binding site" evidence="1">
    <location>
        <position position="146"/>
    </location>
    <ligand>
        <name>Zn(2+)</name>
        <dbReference type="ChEBI" id="CHEBI:29105"/>
    </ligand>
</feature>
<feature type="binding site" evidence="1">
    <location>
        <position position="149"/>
    </location>
    <ligand>
        <name>Zn(2+)</name>
        <dbReference type="ChEBI" id="CHEBI:29105"/>
    </ligand>
</feature>
<feature type="binding site" evidence="1">
    <location>
        <position position="300"/>
    </location>
    <ligand>
        <name>ATP</name>
        <dbReference type="ChEBI" id="CHEBI:30616"/>
    </ligand>
</feature>
<sequence length="629" mass="73004">MKFYITTPIYYVNSEPHIGSAYTTIVADIIARYKRFMGYDVFFLTGTDEHGQKVLQAAQQAGKDPQEFCDELAEKFKRLWKELKITNDYFIRTTDEMHMKTVQEFVAKMKENGDVYKGIYKGWYCVPCETFWNEDEVIKEGEERFCPECKRPVKWVEEENYFFRLSKYRDSLLKYYEEHPDFVEPDFRRNEMLKILEGGLKDLSITRTTFKWGVPMKDDPEHVIYVWVDALINYISAIGYGWNDEMFNKWWPADLHLIGKEINRFHSIIWPAMLMSVGLPLPKKVFAHGWLTVNGQKISKSLGNAIDPRFFVKRYGNDVVRYYLIRDIMFGKDGDFSEERLVHRLNSDLANDYGNLLHRITAMIKKYFNGRLPSPSAQEGFDSWLKERFFETKDAYHELMDSYRLTEALDKIWEFIADVNKYFNDTKPWILGKEGNMERLGTVLYNSLEAVFKVALMTLPVMPDTSEEVFRRVSFEEKPSKEHLENWGVLKPGSTVIHGEPLFKKIDAKDFKKVVETVSAEQNAITIDDFSKVDLRIAKVLEAEKVPNSRKLLRLIIDLGTEKRQIVAGIAEHYRPEELVGKLIVVVANLKPAKLMGIESQGMLLAAKSGDTLRLLTVDGEITPGAKVS</sequence>
<comment type="function">
    <text evidence="1">Is required not only for elongation of protein synthesis but also for the initiation of all mRNA translation through initiator tRNA(fMet) aminoacylation.</text>
</comment>
<comment type="catalytic activity">
    <reaction>
        <text>tRNA(Met) + L-methionine + ATP = L-methionyl-tRNA(Met) + AMP + diphosphate</text>
        <dbReference type="Rhea" id="RHEA:13481"/>
        <dbReference type="Rhea" id="RHEA-COMP:9667"/>
        <dbReference type="Rhea" id="RHEA-COMP:9698"/>
        <dbReference type="ChEBI" id="CHEBI:30616"/>
        <dbReference type="ChEBI" id="CHEBI:33019"/>
        <dbReference type="ChEBI" id="CHEBI:57844"/>
        <dbReference type="ChEBI" id="CHEBI:78442"/>
        <dbReference type="ChEBI" id="CHEBI:78530"/>
        <dbReference type="ChEBI" id="CHEBI:456215"/>
        <dbReference type="EC" id="6.1.1.10"/>
    </reaction>
</comment>
<comment type="cofactor">
    <cofactor evidence="1">
        <name>Zn(2+)</name>
        <dbReference type="ChEBI" id="CHEBI:29105"/>
    </cofactor>
    <text evidence="1">Binds 1 zinc ion per subunit.</text>
</comment>
<comment type="subunit">
    <text evidence="1">Homodimer.</text>
</comment>
<comment type="subcellular location">
    <subcellularLocation>
        <location evidence="1">Cytoplasm</location>
    </subcellularLocation>
</comment>
<comment type="similarity">
    <text evidence="2">Belongs to the class-I aminoacyl-tRNA synthetase family. MetG type 2A subfamily.</text>
</comment>
<name>SYM_THEMA</name>
<dbReference type="EC" id="6.1.1.10"/>
<dbReference type="EMBL" id="U76417">
    <property type="protein sequence ID" value="AAB87143.1"/>
    <property type="molecule type" value="Genomic_DNA"/>
</dbReference>
<dbReference type="EMBL" id="AE000512">
    <property type="protein sequence ID" value="AAD36162.1"/>
    <property type="molecule type" value="Genomic_DNA"/>
</dbReference>
<dbReference type="PIR" id="E72297">
    <property type="entry name" value="E72297"/>
</dbReference>
<dbReference type="RefSeq" id="NP_228891.1">
    <property type="nucleotide sequence ID" value="NC_000853.1"/>
</dbReference>
<dbReference type="RefSeq" id="WP_004080396.1">
    <property type="nucleotide sequence ID" value="NC_000853.1"/>
</dbReference>
<dbReference type="SMR" id="O33925"/>
<dbReference type="FunCoup" id="O33925">
    <property type="interactions" value="359"/>
</dbReference>
<dbReference type="STRING" id="243274.TM_1085"/>
<dbReference type="PaxDb" id="243274-THEMA_08930"/>
<dbReference type="DNASU" id="897213"/>
<dbReference type="EnsemblBacteria" id="AAD36162">
    <property type="protein sequence ID" value="AAD36162"/>
    <property type="gene ID" value="TM_1085"/>
</dbReference>
<dbReference type="KEGG" id="tma:TM1085"/>
<dbReference type="KEGG" id="tmi:THEMA_08930"/>
<dbReference type="KEGG" id="tmm:Tmari_1089"/>
<dbReference type="KEGG" id="tmw:THMA_1107"/>
<dbReference type="eggNOG" id="COG0073">
    <property type="taxonomic scope" value="Bacteria"/>
</dbReference>
<dbReference type="eggNOG" id="COG0143">
    <property type="taxonomic scope" value="Bacteria"/>
</dbReference>
<dbReference type="InParanoid" id="O33925"/>
<dbReference type="OrthoDB" id="9810191at2"/>
<dbReference type="Proteomes" id="UP000008183">
    <property type="component" value="Chromosome"/>
</dbReference>
<dbReference type="GO" id="GO:0005737">
    <property type="term" value="C:cytoplasm"/>
    <property type="evidence" value="ECO:0007669"/>
    <property type="project" value="UniProtKB-SubCell"/>
</dbReference>
<dbReference type="GO" id="GO:0005524">
    <property type="term" value="F:ATP binding"/>
    <property type="evidence" value="ECO:0007669"/>
    <property type="project" value="UniProtKB-UniRule"/>
</dbReference>
<dbReference type="GO" id="GO:0046872">
    <property type="term" value="F:metal ion binding"/>
    <property type="evidence" value="ECO:0007669"/>
    <property type="project" value="UniProtKB-KW"/>
</dbReference>
<dbReference type="GO" id="GO:0004825">
    <property type="term" value="F:methionine-tRNA ligase activity"/>
    <property type="evidence" value="ECO:0000318"/>
    <property type="project" value="GO_Central"/>
</dbReference>
<dbReference type="GO" id="GO:0000049">
    <property type="term" value="F:tRNA binding"/>
    <property type="evidence" value="ECO:0007669"/>
    <property type="project" value="UniProtKB-KW"/>
</dbReference>
<dbReference type="GO" id="GO:0006431">
    <property type="term" value="P:methionyl-tRNA aminoacylation"/>
    <property type="evidence" value="ECO:0000318"/>
    <property type="project" value="GO_Central"/>
</dbReference>
<dbReference type="CDD" id="cd07957">
    <property type="entry name" value="Anticodon_Ia_Met"/>
    <property type="match status" value="1"/>
</dbReference>
<dbReference type="CDD" id="cd00814">
    <property type="entry name" value="MetRS_core"/>
    <property type="match status" value="1"/>
</dbReference>
<dbReference type="CDD" id="cd02800">
    <property type="entry name" value="tRNA_bind_EcMetRS_like"/>
    <property type="match status" value="1"/>
</dbReference>
<dbReference type="FunFam" id="2.170.220.10:FF:000002">
    <property type="entry name" value="Methionine--tRNA ligase"/>
    <property type="match status" value="1"/>
</dbReference>
<dbReference type="FunFam" id="2.40.50.140:FF:000042">
    <property type="entry name" value="Methionine--tRNA ligase"/>
    <property type="match status" value="1"/>
</dbReference>
<dbReference type="Gene3D" id="2.170.220.10">
    <property type="match status" value="1"/>
</dbReference>
<dbReference type="Gene3D" id="3.40.50.620">
    <property type="entry name" value="HUPs"/>
    <property type="match status" value="1"/>
</dbReference>
<dbReference type="Gene3D" id="1.10.730.10">
    <property type="entry name" value="Isoleucyl-tRNA Synthetase, Domain 1"/>
    <property type="match status" value="1"/>
</dbReference>
<dbReference type="Gene3D" id="2.40.50.140">
    <property type="entry name" value="Nucleic acid-binding proteins"/>
    <property type="match status" value="1"/>
</dbReference>
<dbReference type="HAMAP" id="MF_01228">
    <property type="entry name" value="Met_tRNA_synth_type2"/>
    <property type="match status" value="1"/>
</dbReference>
<dbReference type="InterPro" id="IPR041872">
    <property type="entry name" value="Anticodon_Met"/>
</dbReference>
<dbReference type="InterPro" id="IPR013155">
    <property type="entry name" value="M/V/L/I-tRNA-synth_anticd-bd"/>
</dbReference>
<dbReference type="InterPro" id="IPR004495">
    <property type="entry name" value="Met-tRNA-synth_bsu_C"/>
</dbReference>
<dbReference type="InterPro" id="IPR014758">
    <property type="entry name" value="Met-tRNA_synth"/>
</dbReference>
<dbReference type="InterPro" id="IPR023457">
    <property type="entry name" value="Met-tRNA_synth_2"/>
</dbReference>
<dbReference type="InterPro" id="IPR015413">
    <property type="entry name" value="Methionyl/Leucyl_tRNA_Synth"/>
</dbReference>
<dbReference type="InterPro" id="IPR033911">
    <property type="entry name" value="MetRS_core"/>
</dbReference>
<dbReference type="InterPro" id="IPR012340">
    <property type="entry name" value="NA-bd_OB-fold"/>
</dbReference>
<dbReference type="InterPro" id="IPR014729">
    <property type="entry name" value="Rossmann-like_a/b/a_fold"/>
</dbReference>
<dbReference type="InterPro" id="IPR002547">
    <property type="entry name" value="tRNA-bd_dom"/>
</dbReference>
<dbReference type="InterPro" id="IPR009080">
    <property type="entry name" value="tRNAsynth_Ia_anticodon-bd"/>
</dbReference>
<dbReference type="NCBIfam" id="TIGR00398">
    <property type="entry name" value="metG"/>
    <property type="match status" value="1"/>
</dbReference>
<dbReference type="NCBIfam" id="TIGR00399">
    <property type="entry name" value="metG_C_term"/>
    <property type="match status" value="1"/>
</dbReference>
<dbReference type="NCBIfam" id="NF008900">
    <property type="entry name" value="PRK12267.1"/>
    <property type="match status" value="1"/>
</dbReference>
<dbReference type="PANTHER" id="PTHR43326:SF1">
    <property type="entry name" value="METHIONINE--TRNA LIGASE, MITOCHONDRIAL"/>
    <property type="match status" value="1"/>
</dbReference>
<dbReference type="PANTHER" id="PTHR43326">
    <property type="entry name" value="METHIONYL-TRNA SYNTHETASE"/>
    <property type="match status" value="1"/>
</dbReference>
<dbReference type="Pfam" id="PF08264">
    <property type="entry name" value="Anticodon_1"/>
    <property type="match status" value="1"/>
</dbReference>
<dbReference type="Pfam" id="PF09334">
    <property type="entry name" value="tRNA-synt_1g"/>
    <property type="match status" value="1"/>
</dbReference>
<dbReference type="Pfam" id="PF01588">
    <property type="entry name" value="tRNA_bind"/>
    <property type="match status" value="1"/>
</dbReference>
<dbReference type="PRINTS" id="PR01041">
    <property type="entry name" value="TRNASYNTHMET"/>
</dbReference>
<dbReference type="SUPFAM" id="SSF47323">
    <property type="entry name" value="Anticodon-binding domain of a subclass of class I aminoacyl-tRNA synthetases"/>
    <property type="match status" value="1"/>
</dbReference>
<dbReference type="SUPFAM" id="SSF50249">
    <property type="entry name" value="Nucleic acid-binding proteins"/>
    <property type="match status" value="1"/>
</dbReference>
<dbReference type="SUPFAM" id="SSF52374">
    <property type="entry name" value="Nucleotidylyl transferase"/>
    <property type="match status" value="1"/>
</dbReference>
<dbReference type="PROSITE" id="PS50886">
    <property type="entry name" value="TRBD"/>
    <property type="match status" value="1"/>
</dbReference>
<accession>O33925</accession>
<reference key="1">
    <citation type="journal article" date="1997" name="Proc. Natl. Acad. Sci. U.S.A.">
        <title>Both DNA gyrase and reverse gyrase are present in the hyperthermophilic bacterium Thermotoga maritima.</title>
        <authorList>
            <person name="Guipaud O."/>
            <person name="Marguet E."/>
            <person name="Noll K.M."/>
            <person name="Bouthier de la Tour C."/>
            <person name="Forterre P."/>
        </authorList>
    </citation>
    <scope>NUCLEOTIDE SEQUENCE [GENOMIC DNA]</scope>
    <source>
        <strain>ATCC 43589 / DSM 3109 / JCM 10099 / NBRC 100826 / MSB8</strain>
    </source>
</reference>
<reference key="2">
    <citation type="journal article" date="1999" name="Nature">
        <title>Evidence for lateral gene transfer between Archaea and Bacteria from genome sequence of Thermotoga maritima.</title>
        <authorList>
            <person name="Nelson K.E."/>
            <person name="Clayton R.A."/>
            <person name="Gill S.R."/>
            <person name="Gwinn M.L."/>
            <person name="Dodson R.J."/>
            <person name="Haft D.H."/>
            <person name="Hickey E.K."/>
            <person name="Peterson J.D."/>
            <person name="Nelson W.C."/>
            <person name="Ketchum K.A."/>
            <person name="McDonald L.A."/>
            <person name="Utterback T.R."/>
            <person name="Malek J.A."/>
            <person name="Linher K.D."/>
            <person name="Garrett M.M."/>
            <person name="Stewart A.M."/>
            <person name="Cotton M.D."/>
            <person name="Pratt M.S."/>
            <person name="Phillips C.A."/>
            <person name="Richardson D.L."/>
            <person name="Heidelberg J.F."/>
            <person name="Sutton G.G."/>
            <person name="Fleischmann R.D."/>
            <person name="Eisen J.A."/>
            <person name="White O."/>
            <person name="Salzberg S.L."/>
            <person name="Smith H.O."/>
            <person name="Venter J.C."/>
            <person name="Fraser C.M."/>
        </authorList>
    </citation>
    <scope>NUCLEOTIDE SEQUENCE [LARGE SCALE GENOMIC DNA]</scope>
    <source>
        <strain>ATCC 43589 / DSM 3109 / JCM 10099 / NBRC 100826 / MSB8</strain>
    </source>
</reference>
<organism>
    <name type="scientific">Thermotoga maritima (strain ATCC 43589 / DSM 3109 / JCM 10099 / NBRC 100826 / MSB8)</name>
    <dbReference type="NCBI Taxonomy" id="243274"/>
    <lineage>
        <taxon>Bacteria</taxon>
        <taxon>Thermotogati</taxon>
        <taxon>Thermotogota</taxon>
        <taxon>Thermotogae</taxon>
        <taxon>Thermotogales</taxon>
        <taxon>Thermotogaceae</taxon>
        <taxon>Thermotoga</taxon>
    </lineage>
</organism>